<comment type="function">
    <text evidence="1">Catalyzes the addition and repair of the essential 3'-terminal CCA sequence in tRNAs without using a nucleic acid template. Adds these three nucleotides in the order of C, C, and A to the tRNA nucleotide-73, using CTP and ATP as substrates and producing inorganic pyrophosphate. tRNA 3'-terminal CCA addition is required both for tRNA processing and repair. Also involved in tRNA surveillance by mediating tandem CCA addition to generate a CCACCA at the 3' terminus of unstable tRNAs. While stable tRNAs receive only 3'-terminal CCA, unstable tRNAs are marked with CCACCA and rapidly degraded.</text>
</comment>
<comment type="catalytic activity">
    <reaction evidence="1">
        <text>a tRNA precursor + 2 CTP + ATP = a tRNA with a 3' CCA end + 3 diphosphate</text>
        <dbReference type="Rhea" id="RHEA:14433"/>
        <dbReference type="Rhea" id="RHEA-COMP:10465"/>
        <dbReference type="Rhea" id="RHEA-COMP:10468"/>
        <dbReference type="ChEBI" id="CHEBI:30616"/>
        <dbReference type="ChEBI" id="CHEBI:33019"/>
        <dbReference type="ChEBI" id="CHEBI:37563"/>
        <dbReference type="ChEBI" id="CHEBI:74896"/>
        <dbReference type="ChEBI" id="CHEBI:83071"/>
        <dbReference type="EC" id="2.7.7.72"/>
    </reaction>
</comment>
<comment type="catalytic activity">
    <reaction evidence="1">
        <text>a tRNA with a 3' CCA end + 2 CTP + ATP = a tRNA with a 3' CCACCA end + 3 diphosphate</text>
        <dbReference type="Rhea" id="RHEA:76235"/>
        <dbReference type="Rhea" id="RHEA-COMP:10468"/>
        <dbReference type="Rhea" id="RHEA-COMP:18655"/>
        <dbReference type="ChEBI" id="CHEBI:30616"/>
        <dbReference type="ChEBI" id="CHEBI:33019"/>
        <dbReference type="ChEBI" id="CHEBI:37563"/>
        <dbReference type="ChEBI" id="CHEBI:83071"/>
        <dbReference type="ChEBI" id="CHEBI:195187"/>
    </reaction>
    <physiologicalReaction direction="left-to-right" evidence="1">
        <dbReference type="Rhea" id="RHEA:76236"/>
    </physiologicalReaction>
</comment>
<comment type="cofactor">
    <cofactor evidence="1">
        <name>Mg(2+)</name>
        <dbReference type="ChEBI" id="CHEBI:18420"/>
    </cofactor>
</comment>
<comment type="subunit">
    <text evidence="1">Homodimer.</text>
</comment>
<comment type="miscellaneous">
    <text evidence="1">A single active site specifically recognizes both ATP and CTP and is responsible for their addition.</text>
</comment>
<comment type="similarity">
    <text evidence="1">Belongs to the tRNA nucleotidyltransferase/poly(A) polymerase family. Bacterial CCA-adding enzyme type 3 subfamily.</text>
</comment>
<protein>
    <recommendedName>
        <fullName evidence="1">CCA-adding enzyme</fullName>
        <ecNumber evidence="1">2.7.7.72</ecNumber>
    </recommendedName>
    <alternativeName>
        <fullName evidence="1">CCA tRNA nucleotidyltransferase</fullName>
    </alternativeName>
    <alternativeName>
        <fullName evidence="1">tRNA CCA-pyrophosphorylase</fullName>
    </alternativeName>
    <alternativeName>
        <fullName evidence="1">tRNA adenylyl-/cytidylyl- transferase</fullName>
    </alternativeName>
    <alternativeName>
        <fullName evidence="1">tRNA nucleotidyltransferase</fullName>
    </alternativeName>
    <alternativeName>
        <fullName evidence="1">tRNA-NT</fullName>
    </alternativeName>
</protein>
<accession>Q039G0</accession>
<feature type="chain" id="PRO_1000054324" description="CCA-adding enzyme">
    <location>
        <begin position="1"/>
        <end position="398"/>
    </location>
</feature>
<feature type="binding site" evidence="1">
    <location>
        <position position="32"/>
    </location>
    <ligand>
        <name>ATP</name>
        <dbReference type="ChEBI" id="CHEBI:30616"/>
    </ligand>
</feature>
<feature type="binding site" evidence="1">
    <location>
        <position position="32"/>
    </location>
    <ligand>
        <name>CTP</name>
        <dbReference type="ChEBI" id="CHEBI:37563"/>
    </ligand>
</feature>
<feature type="binding site" evidence="1">
    <location>
        <position position="35"/>
    </location>
    <ligand>
        <name>ATP</name>
        <dbReference type="ChEBI" id="CHEBI:30616"/>
    </ligand>
</feature>
<feature type="binding site" evidence="1">
    <location>
        <position position="35"/>
    </location>
    <ligand>
        <name>CTP</name>
        <dbReference type="ChEBI" id="CHEBI:37563"/>
    </ligand>
</feature>
<feature type="binding site" evidence="1">
    <location>
        <position position="45"/>
    </location>
    <ligand>
        <name>Mg(2+)</name>
        <dbReference type="ChEBI" id="CHEBI:18420"/>
    </ligand>
</feature>
<feature type="binding site" evidence="1">
    <location>
        <position position="47"/>
    </location>
    <ligand>
        <name>Mg(2+)</name>
        <dbReference type="ChEBI" id="CHEBI:18420"/>
    </ligand>
</feature>
<feature type="binding site" evidence="1">
    <location>
        <position position="116"/>
    </location>
    <ligand>
        <name>ATP</name>
        <dbReference type="ChEBI" id="CHEBI:30616"/>
    </ligand>
</feature>
<feature type="binding site" evidence="1">
    <location>
        <position position="116"/>
    </location>
    <ligand>
        <name>CTP</name>
        <dbReference type="ChEBI" id="CHEBI:37563"/>
    </ligand>
</feature>
<feature type="binding site" evidence="1">
    <location>
        <position position="159"/>
    </location>
    <ligand>
        <name>ATP</name>
        <dbReference type="ChEBI" id="CHEBI:30616"/>
    </ligand>
</feature>
<feature type="binding site" evidence="1">
    <location>
        <position position="159"/>
    </location>
    <ligand>
        <name>CTP</name>
        <dbReference type="ChEBI" id="CHEBI:37563"/>
    </ligand>
</feature>
<feature type="binding site" evidence="1">
    <location>
        <position position="162"/>
    </location>
    <ligand>
        <name>ATP</name>
        <dbReference type="ChEBI" id="CHEBI:30616"/>
    </ligand>
</feature>
<feature type="binding site" evidence="1">
    <location>
        <position position="162"/>
    </location>
    <ligand>
        <name>CTP</name>
        <dbReference type="ChEBI" id="CHEBI:37563"/>
    </ligand>
</feature>
<feature type="binding site" evidence="1">
    <location>
        <position position="165"/>
    </location>
    <ligand>
        <name>ATP</name>
        <dbReference type="ChEBI" id="CHEBI:30616"/>
    </ligand>
</feature>
<feature type="binding site" evidence="1">
    <location>
        <position position="165"/>
    </location>
    <ligand>
        <name>CTP</name>
        <dbReference type="ChEBI" id="CHEBI:37563"/>
    </ligand>
</feature>
<feature type="binding site" evidence="1">
    <location>
        <position position="168"/>
    </location>
    <ligand>
        <name>ATP</name>
        <dbReference type="ChEBI" id="CHEBI:30616"/>
    </ligand>
</feature>
<feature type="binding site" evidence="1">
    <location>
        <position position="168"/>
    </location>
    <ligand>
        <name>CTP</name>
        <dbReference type="ChEBI" id="CHEBI:37563"/>
    </ligand>
</feature>
<dbReference type="EC" id="2.7.7.72" evidence="1"/>
<dbReference type="EMBL" id="CP000423">
    <property type="protein sequence ID" value="ABJ70162.1"/>
    <property type="molecule type" value="Genomic_DNA"/>
</dbReference>
<dbReference type="RefSeq" id="WP_003570288.1">
    <property type="nucleotide sequence ID" value="NC_008526.1"/>
</dbReference>
<dbReference type="RefSeq" id="YP_806604.1">
    <property type="nucleotide sequence ID" value="NC_008526.1"/>
</dbReference>
<dbReference type="SMR" id="Q039G0"/>
<dbReference type="STRING" id="321967.LSEI_1384"/>
<dbReference type="PaxDb" id="321967-LSEI_1384"/>
<dbReference type="KEGG" id="lca:LSEI_1384"/>
<dbReference type="PATRIC" id="fig|321967.11.peg.1363"/>
<dbReference type="HOGENOM" id="CLU_015961_3_1_9"/>
<dbReference type="Proteomes" id="UP000001651">
    <property type="component" value="Chromosome"/>
</dbReference>
<dbReference type="GO" id="GO:0005524">
    <property type="term" value="F:ATP binding"/>
    <property type="evidence" value="ECO:0007669"/>
    <property type="project" value="UniProtKB-UniRule"/>
</dbReference>
<dbReference type="GO" id="GO:0004810">
    <property type="term" value="F:CCA tRNA nucleotidyltransferase activity"/>
    <property type="evidence" value="ECO:0007669"/>
    <property type="project" value="UniProtKB-UniRule"/>
</dbReference>
<dbReference type="GO" id="GO:0000287">
    <property type="term" value="F:magnesium ion binding"/>
    <property type="evidence" value="ECO:0007669"/>
    <property type="project" value="UniProtKB-UniRule"/>
</dbReference>
<dbReference type="GO" id="GO:0000049">
    <property type="term" value="F:tRNA binding"/>
    <property type="evidence" value="ECO:0007669"/>
    <property type="project" value="UniProtKB-UniRule"/>
</dbReference>
<dbReference type="GO" id="GO:0042245">
    <property type="term" value="P:RNA repair"/>
    <property type="evidence" value="ECO:0007669"/>
    <property type="project" value="UniProtKB-KW"/>
</dbReference>
<dbReference type="GO" id="GO:0001680">
    <property type="term" value="P:tRNA 3'-terminal CCA addition"/>
    <property type="evidence" value="ECO:0007669"/>
    <property type="project" value="UniProtKB-UniRule"/>
</dbReference>
<dbReference type="CDD" id="cd05398">
    <property type="entry name" value="NT_ClassII-CCAase"/>
    <property type="match status" value="1"/>
</dbReference>
<dbReference type="Gene3D" id="1.10.246.80">
    <property type="match status" value="1"/>
</dbReference>
<dbReference type="Gene3D" id="1.20.58.560">
    <property type="match status" value="1"/>
</dbReference>
<dbReference type="Gene3D" id="3.30.460.10">
    <property type="entry name" value="Beta Polymerase, domain 2"/>
    <property type="match status" value="1"/>
</dbReference>
<dbReference type="Gene3D" id="1.10.3090.10">
    <property type="entry name" value="cca-adding enzyme, domain 2"/>
    <property type="match status" value="1"/>
</dbReference>
<dbReference type="HAMAP" id="MF_01263">
    <property type="entry name" value="CCA_bact_type3"/>
    <property type="match status" value="1"/>
</dbReference>
<dbReference type="InterPro" id="IPR050264">
    <property type="entry name" value="Bact_CCA-adding_enz_type3_sf"/>
</dbReference>
<dbReference type="InterPro" id="IPR032810">
    <property type="entry name" value="CCA-adding_enz_C"/>
</dbReference>
<dbReference type="InterPro" id="IPR023068">
    <property type="entry name" value="CCA-adding_enz_firmicutes"/>
</dbReference>
<dbReference type="InterPro" id="IPR043519">
    <property type="entry name" value="NT_sf"/>
</dbReference>
<dbReference type="InterPro" id="IPR002646">
    <property type="entry name" value="PolA_pol_head_dom"/>
</dbReference>
<dbReference type="InterPro" id="IPR032828">
    <property type="entry name" value="PolyA_RNA-bd"/>
</dbReference>
<dbReference type="NCBIfam" id="NF009814">
    <property type="entry name" value="PRK13299.1"/>
    <property type="match status" value="1"/>
</dbReference>
<dbReference type="PANTHER" id="PTHR46173">
    <property type="entry name" value="CCA TRNA NUCLEOTIDYLTRANSFERASE 1, MITOCHONDRIAL"/>
    <property type="match status" value="1"/>
</dbReference>
<dbReference type="PANTHER" id="PTHR46173:SF1">
    <property type="entry name" value="CCA TRNA NUCLEOTIDYLTRANSFERASE 1, MITOCHONDRIAL"/>
    <property type="match status" value="1"/>
</dbReference>
<dbReference type="Pfam" id="PF01743">
    <property type="entry name" value="PolyA_pol"/>
    <property type="match status" value="1"/>
</dbReference>
<dbReference type="Pfam" id="PF12627">
    <property type="entry name" value="PolyA_pol_RNAbd"/>
    <property type="match status" value="1"/>
</dbReference>
<dbReference type="Pfam" id="PF13735">
    <property type="entry name" value="tRNA_NucTran2_2"/>
    <property type="match status" value="1"/>
</dbReference>
<dbReference type="SUPFAM" id="SSF81301">
    <property type="entry name" value="Nucleotidyltransferase"/>
    <property type="match status" value="1"/>
</dbReference>
<dbReference type="SUPFAM" id="SSF81891">
    <property type="entry name" value="Poly A polymerase C-terminal region-like"/>
    <property type="match status" value="1"/>
</dbReference>
<reference key="1">
    <citation type="journal article" date="2006" name="Proc. Natl. Acad. Sci. U.S.A.">
        <title>Comparative genomics of the lactic acid bacteria.</title>
        <authorList>
            <person name="Makarova K.S."/>
            <person name="Slesarev A."/>
            <person name="Wolf Y.I."/>
            <person name="Sorokin A."/>
            <person name="Mirkin B."/>
            <person name="Koonin E.V."/>
            <person name="Pavlov A."/>
            <person name="Pavlova N."/>
            <person name="Karamychev V."/>
            <person name="Polouchine N."/>
            <person name="Shakhova V."/>
            <person name="Grigoriev I."/>
            <person name="Lou Y."/>
            <person name="Rohksar D."/>
            <person name="Lucas S."/>
            <person name="Huang K."/>
            <person name="Goodstein D.M."/>
            <person name="Hawkins T."/>
            <person name="Plengvidhya V."/>
            <person name="Welker D."/>
            <person name="Hughes J."/>
            <person name="Goh Y."/>
            <person name="Benson A."/>
            <person name="Baldwin K."/>
            <person name="Lee J.-H."/>
            <person name="Diaz-Muniz I."/>
            <person name="Dosti B."/>
            <person name="Smeianov V."/>
            <person name="Wechter W."/>
            <person name="Barabote R."/>
            <person name="Lorca G."/>
            <person name="Altermann E."/>
            <person name="Barrangou R."/>
            <person name="Ganesan B."/>
            <person name="Xie Y."/>
            <person name="Rawsthorne H."/>
            <person name="Tamir D."/>
            <person name="Parker C."/>
            <person name="Breidt F."/>
            <person name="Broadbent J.R."/>
            <person name="Hutkins R."/>
            <person name="O'Sullivan D."/>
            <person name="Steele J."/>
            <person name="Unlu G."/>
            <person name="Saier M.H. Jr."/>
            <person name="Klaenhammer T."/>
            <person name="Richardson P."/>
            <person name="Kozyavkin S."/>
            <person name="Weimer B.C."/>
            <person name="Mills D.A."/>
        </authorList>
    </citation>
    <scope>NUCLEOTIDE SEQUENCE [LARGE SCALE GENOMIC DNA]</scope>
    <source>
        <strain>ATCC 334 / BCRC 17002 / CCUG 31169 / CIP 107868 / KCTC 3260 / NRRL B-441</strain>
    </source>
</reference>
<name>CCA_LACP3</name>
<keyword id="KW-0067">ATP-binding</keyword>
<keyword id="KW-0460">Magnesium</keyword>
<keyword id="KW-0479">Metal-binding</keyword>
<keyword id="KW-0547">Nucleotide-binding</keyword>
<keyword id="KW-0548">Nucleotidyltransferase</keyword>
<keyword id="KW-1185">Reference proteome</keyword>
<keyword id="KW-0692">RNA repair</keyword>
<keyword id="KW-0694">RNA-binding</keyword>
<keyword id="KW-0808">Transferase</keyword>
<keyword id="KW-0819">tRNA processing</keyword>
<gene>
    <name evidence="1" type="primary">cca</name>
    <name type="ordered locus">LSEI_1384</name>
</gene>
<organism>
    <name type="scientific">Lacticaseibacillus paracasei (strain ATCC 334 / BCRC 17002 / CCUG 31169 / CIP 107868 / KCTC 3260 / NRRL B-441)</name>
    <name type="common">Lactobacillus paracasei</name>
    <dbReference type="NCBI Taxonomy" id="321967"/>
    <lineage>
        <taxon>Bacteria</taxon>
        <taxon>Bacillati</taxon>
        <taxon>Bacillota</taxon>
        <taxon>Bacilli</taxon>
        <taxon>Lactobacillales</taxon>
        <taxon>Lactobacillaceae</taxon>
        <taxon>Lacticaseibacillus</taxon>
    </lineage>
</organism>
<proteinExistence type="inferred from homology"/>
<evidence type="ECO:0000255" key="1">
    <source>
        <dbReference type="HAMAP-Rule" id="MF_01263"/>
    </source>
</evidence>
<sequence>MRLDLTQPDFKAAIPILKKIEAAGYEAYFVGGSVRDAILGLPIHDVDIASSAYPAEIKRIFKRTADTGIEHGTVMVLDHGTGYEVTTFRTESRYQDFRRPDHVTFVRSLAEDLKRRDFTINALAVRHDGTIIDLFDGLKDLQHHQLRAVGNPHERFHEDALRMMRAVRFESQLGFGIEPATKAAIADNAKLLVHISVERVAAEFNRLLTGIDRRAGLQDFIETRLFAYAPKMAAHETALTQFSQLPDTQLTSLASGWAALIFLLRTQPLVMLKAWKQSNELITLVTQTVKLLQVMPNPTAWDLYQAGEAAVTTASEVQKLLTPDFDQQQLAEAYAALPIHSKKELALTGADLIKAGVRPGPAMGKALNQIEQRVVAGALPNELKKLLPIATEMSQDRL</sequence>